<gene>
    <name evidence="1" type="primary">ycaR</name>
    <name type="ordered locus">c1058</name>
</gene>
<sequence>MDHRLLEIIACPVCNGKLWYNQEKQELICKLDNLAFPLRDGIPVLLETEARVLTADESKS</sequence>
<accession>P0AAZ8</accession>
<accession>P75844</accession>
<reference key="1">
    <citation type="journal article" date="2002" name="Proc. Natl. Acad. Sci. U.S.A.">
        <title>Extensive mosaic structure revealed by the complete genome sequence of uropathogenic Escherichia coli.</title>
        <authorList>
            <person name="Welch R.A."/>
            <person name="Burland V."/>
            <person name="Plunkett G. III"/>
            <person name="Redford P."/>
            <person name="Roesch P."/>
            <person name="Rasko D."/>
            <person name="Buckles E.L."/>
            <person name="Liou S.-R."/>
            <person name="Boutin A."/>
            <person name="Hackett J."/>
            <person name="Stroud D."/>
            <person name="Mayhew G.F."/>
            <person name="Rose D.J."/>
            <person name="Zhou S."/>
            <person name="Schwartz D.C."/>
            <person name="Perna N.T."/>
            <person name="Mobley H.L.T."/>
            <person name="Donnenberg M.S."/>
            <person name="Blattner F.R."/>
        </authorList>
    </citation>
    <scope>NUCLEOTIDE SEQUENCE [LARGE SCALE GENOMIC DNA]</scope>
    <source>
        <strain>CFT073 / ATCC 700928 / UPEC</strain>
    </source>
</reference>
<keyword id="KW-1185">Reference proteome</keyword>
<dbReference type="EMBL" id="AE014075">
    <property type="protein sequence ID" value="AAN79526.1"/>
    <property type="molecule type" value="Genomic_DNA"/>
</dbReference>
<dbReference type="RefSeq" id="WP_000350058.1">
    <property type="nucleotide sequence ID" value="NZ_CP051263.1"/>
</dbReference>
<dbReference type="SMR" id="P0AAZ8"/>
<dbReference type="STRING" id="199310.c1058"/>
<dbReference type="GeneID" id="93776498"/>
<dbReference type="KEGG" id="ecc:c1058"/>
<dbReference type="eggNOG" id="COG2835">
    <property type="taxonomic scope" value="Bacteria"/>
</dbReference>
<dbReference type="HOGENOM" id="CLU_155659_3_1_6"/>
<dbReference type="BioCyc" id="ECOL199310:C1058-MONOMER"/>
<dbReference type="Proteomes" id="UP000001410">
    <property type="component" value="Chromosome"/>
</dbReference>
<dbReference type="GO" id="GO:0005829">
    <property type="term" value="C:cytosol"/>
    <property type="evidence" value="ECO:0007669"/>
    <property type="project" value="TreeGrafter"/>
</dbReference>
<dbReference type="FunFam" id="2.20.25.10:FF:000002">
    <property type="entry name" value="UPF0434 protein YcaR"/>
    <property type="match status" value="1"/>
</dbReference>
<dbReference type="Gene3D" id="2.20.25.10">
    <property type="match status" value="1"/>
</dbReference>
<dbReference type="HAMAP" id="MF_01187">
    <property type="entry name" value="UPF0434"/>
    <property type="match status" value="1"/>
</dbReference>
<dbReference type="InterPro" id="IPR005651">
    <property type="entry name" value="Trm112-like"/>
</dbReference>
<dbReference type="NCBIfam" id="NF008806">
    <property type="entry name" value="PRK11827.1"/>
    <property type="match status" value="1"/>
</dbReference>
<dbReference type="PANTHER" id="PTHR33505:SF4">
    <property type="entry name" value="PROTEIN PREY, MITOCHONDRIAL"/>
    <property type="match status" value="1"/>
</dbReference>
<dbReference type="PANTHER" id="PTHR33505">
    <property type="entry name" value="ZGC:162634"/>
    <property type="match status" value="1"/>
</dbReference>
<dbReference type="Pfam" id="PF03966">
    <property type="entry name" value="Trm112p"/>
    <property type="match status" value="1"/>
</dbReference>
<dbReference type="SUPFAM" id="SSF158997">
    <property type="entry name" value="Trm112p-like"/>
    <property type="match status" value="1"/>
</dbReference>
<evidence type="ECO:0000255" key="1">
    <source>
        <dbReference type="HAMAP-Rule" id="MF_01187"/>
    </source>
</evidence>
<feature type="chain" id="PRO_0000168764" description="UPF0434 protein YcaR">
    <location>
        <begin position="1"/>
        <end position="60"/>
    </location>
</feature>
<name>YCAR_ECOL6</name>
<comment type="similarity">
    <text evidence="1">Belongs to the UPF0434 family.</text>
</comment>
<proteinExistence type="inferred from homology"/>
<organism>
    <name type="scientific">Escherichia coli O6:H1 (strain CFT073 / ATCC 700928 / UPEC)</name>
    <dbReference type="NCBI Taxonomy" id="199310"/>
    <lineage>
        <taxon>Bacteria</taxon>
        <taxon>Pseudomonadati</taxon>
        <taxon>Pseudomonadota</taxon>
        <taxon>Gammaproteobacteria</taxon>
        <taxon>Enterobacterales</taxon>
        <taxon>Enterobacteriaceae</taxon>
        <taxon>Escherichia</taxon>
    </lineage>
</organism>
<protein>
    <recommendedName>
        <fullName evidence="1">UPF0434 protein YcaR</fullName>
    </recommendedName>
</protein>